<organism>
    <name type="scientific">Bacillus licheniformis (strain ATCC 14580 / DSM 13 / JCM 2505 / CCUG 7422 / NBRC 12200 / NCIMB 9375 / NCTC 10341 / NRRL NRS-1264 / Gibson 46)</name>
    <dbReference type="NCBI Taxonomy" id="279010"/>
    <lineage>
        <taxon>Bacteria</taxon>
        <taxon>Bacillati</taxon>
        <taxon>Bacillota</taxon>
        <taxon>Bacilli</taxon>
        <taxon>Bacillales</taxon>
        <taxon>Bacillaceae</taxon>
        <taxon>Bacillus</taxon>
    </lineage>
</organism>
<name>TRMFO_BACLD</name>
<feature type="chain" id="PRO_0000117233" description="Methylenetetrahydrofolate--tRNA-(uracil-5-)-methyltransferase TrmFO">
    <location>
        <begin position="1"/>
        <end position="434"/>
    </location>
</feature>
<feature type="binding site" evidence="1">
    <location>
        <begin position="9"/>
        <end position="14"/>
    </location>
    <ligand>
        <name>FAD</name>
        <dbReference type="ChEBI" id="CHEBI:57692"/>
    </ligand>
</feature>
<sequence length="434" mass="48113">MNQTVNVIGAGLAGSEAAWQLAKRGINVRLYEMRPVKQTPAHHTDKFAELVCSNSLRANSLTNAVGVLKEEMRVLDSAIIAAADECSVPAGGALAVDRHEFAANVTEKVKNHPNVTVLHEEVTEIPEGPTIIATGPLTSEALSAKLRELTGEDYLYFYDAAAPIVEKDSLDMDKVYLKSRYDKGEAAYLNCPMTEEEFDRFYDALVSAETVPLKEFEKEIFFEGCMPIEVMAKRGKKTMLFGPMKPVGLEDPKTGKRPYAVVQLRQDDAAGTLYNIVGFQTHLKWGDQKEVLRLIPGLEQAEIVRYGVMHRNTFINSPSLLKATYQFKKRDDLFFAGQMTGVEGYVESAASGLVAGINAARLIQGKEPVTFSNETAIGSMAHYITETNKKNFQPMNANFGLFKELGVKIKNKQERNEQYASRALETIRNISKTL</sequence>
<keyword id="KW-0963">Cytoplasm</keyword>
<keyword id="KW-0274">FAD</keyword>
<keyword id="KW-0285">Flavoprotein</keyword>
<keyword id="KW-0489">Methyltransferase</keyword>
<keyword id="KW-0520">NAD</keyword>
<keyword id="KW-0521">NADP</keyword>
<keyword id="KW-1185">Reference proteome</keyword>
<keyword id="KW-0808">Transferase</keyword>
<keyword id="KW-0819">tRNA processing</keyword>
<evidence type="ECO:0000255" key="1">
    <source>
        <dbReference type="HAMAP-Rule" id="MF_01037"/>
    </source>
</evidence>
<accession>Q65JN6</accession>
<accession>Q62V41</accession>
<reference key="1">
    <citation type="journal article" date="2004" name="J. Mol. Microbiol. Biotechnol.">
        <title>The complete genome sequence of Bacillus licheniformis DSM13, an organism with great industrial potential.</title>
        <authorList>
            <person name="Veith B."/>
            <person name="Herzberg C."/>
            <person name="Steckel S."/>
            <person name="Feesche J."/>
            <person name="Maurer K.H."/>
            <person name="Ehrenreich P."/>
            <person name="Baeumer S."/>
            <person name="Henne A."/>
            <person name="Liesegang H."/>
            <person name="Merkl R."/>
            <person name="Ehrenreich A."/>
            <person name="Gottschalk G."/>
        </authorList>
    </citation>
    <scope>NUCLEOTIDE SEQUENCE [LARGE SCALE GENOMIC DNA]</scope>
    <source>
        <strain>ATCC 14580 / DSM 13 / JCM 2505 / CCUG 7422 / NBRC 12200 / NCIMB 9375 / NCTC 10341 / NRRL NRS-1264 / Gibson 46</strain>
    </source>
</reference>
<reference key="2">
    <citation type="journal article" date="2004" name="Genome Biol.">
        <title>Complete genome sequence of the industrial bacterium Bacillus licheniformis and comparisons with closely related Bacillus species.</title>
        <authorList>
            <person name="Rey M.W."/>
            <person name="Ramaiya P."/>
            <person name="Nelson B.A."/>
            <person name="Brody-Karpin S.D."/>
            <person name="Zaretsky E.J."/>
            <person name="Tang M."/>
            <person name="Lopez de Leon A."/>
            <person name="Xiang H."/>
            <person name="Gusti V."/>
            <person name="Clausen I.G."/>
            <person name="Olsen P.B."/>
            <person name="Rasmussen M.D."/>
            <person name="Andersen J.T."/>
            <person name="Joergensen P.L."/>
            <person name="Larsen T.S."/>
            <person name="Sorokin A."/>
            <person name="Bolotin A."/>
            <person name="Lapidus A."/>
            <person name="Galleron N."/>
            <person name="Ehrlich S.D."/>
            <person name="Berka R.M."/>
        </authorList>
    </citation>
    <scope>NUCLEOTIDE SEQUENCE [LARGE SCALE GENOMIC DNA]</scope>
    <source>
        <strain>ATCC 14580 / DSM 13 / JCM 2505 / CCUG 7422 / NBRC 12200 / NCIMB 9375 / NCTC 10341 / NRRL NRS-1264 / Gibson 46</strain>
    </source>
</reference>
<dbReference type="EC" id="2.1.1.74" evidence="1"/>
<dbReference type="EMBL" id="AE017333">
    <property type="protein sequence ID" value="AAU40728.1"/>
    <property type="molecule type" value="Genomic_DNA"/>
</dbReference>
<dbReference type="EMBL" id="CP000002">
    <property type="protein sequence ID" value="AAU23368.1"/>
    <property type="molecule type" value="Genomic_DNA"/>
</dbReference>
<dbReference type="RefSeq" id="WP_003181748.1">
    <property type="nucleotide sequence ID" value="NC_006322.1"/>
</dbReference>
<dbReference type="SMR" id="Q65JN6"/>
<dbReference type="STRING" id="279010.BL01280"/>
<dbReference type="GeneID" id="92861574"/>
<dbReference type="KEGG" id="bld:BLi01833"/>
<dbReference type="KEGG" id="bli:BL01280"/>
<dbReference type="eggNOG" id="COG1206">
    <property type="taxonomic scope" value="Bacteria"/>
</dbReference>
<dbReference type="HOGENOM" id="CLU_033057_1_0_9"/>
<dbReference type="Proteomes" id="UP000000606">
    <property type="component" value="Chromosome"/>
</dbReference>
<dbReference type="GO" id="GO:0005829">
    <property type="term" value="C:cytosol"/>
    <property type="evidence" value="ECO:0007669"/>
    <property type="project" value="TreeGrafter"/>
</dbReference>
<dbReference type="GO" id="GO:0050660">
    <property type="term" value="F:flavin adenine dinucleotide binding"/>
    <property type="evidence" value="ECO:0007669"/>
    <property type="project" value="UniProtKB-UniRule"/>
</dbReference>
<dbReference type="GO" id="GO:0047151">
    <property type="term" value="F:tRNA (uracil(54)-C5)-methyltransferase activity, 5,10-methylenetetrahydrofolate-dependent"/>
    <property type="evidence" value="ECO:0007669"/>
    <property type="project" value="UniProtKB-UniRule"/>
</dbReference>
<dbReference type="GO" id="GO:0030488">
    <property type="term" value="P:tRNA methylation"/>
    <property type="evidence" value="ECO:0007669"/>
    <property type="project" value="TreeGrafter"/>
</dbReference>
<dbReference type="GO" id="GO:0002098">
    <property type="term" value="P:tRNA wobble uridine modification"/>
    <property type="evidence" value="ECO:0007669"/>
    <property type="project" value="TreeGrafter"/>
</dbReference>
<dbReference type="FunFam" id="3.50.50.60:FF:000035">
    <property type="entry name" value="Methylenetetrahydrofolate--tRNA-(uracil-5-)-methyltransferase TrmFO"/>
    <property type="match status" value="1"/>
</dbReference>
<dbReference type="FunFam" id="3.50.50.60:FF:000040">
    <property type="entry name" value="Methylenetetrahydrofolate--tRNA-(uracil-5-)-methyltransferase TrmFO"/>
    <property type="match status" value="1"/>
</dbReference>
<dbReference type="Gene3D" id="3.50.50.60">
    <property type="entry name" value="FAD/NAD(P)-binding domain"/>
    <property type="match status" value="2"/>
</dbReference>
<dbReference type="HAMAP" id="MF_01037">
    <property type="entry name" value="TrmFO"/>
    <property type="match status" value="1"/>
</dbReference>
<dbReference type="InterPro" id="IPR036188">
    <property type="entry name" value="FAD/NAD-bd_sf"/>
</dbReference>
<dbReference type="InterPro" id="IPR002218">
    <property type="entry name" value="MnmG-rel"/>
</dbReference>
<dbReference type="InterPro" id="IPR020595">
    <property type="entry name" value="MnmG-rel_CS"/>
</dbReference>
<dbReference type="InterPro" id="IPR040131">
    <property type="entry name" value="MnmG_N"/>
</dbReference>
<dbReference type="InterPro" id="IPR004417">
    <property type="entry name" value="TrmFO"/>
</dbReference>
<dbReference type="NCBIfam" id="TIGR00137">
    <property type="entry name" value="gid_trmFO"/>
    <property type="match status" value="1"/>
</dbReference>
<dbReference type="NCBIfam" id="NF003739">
    <property type="entry name" value="PRK05335.1"/>
    <property type="match status" value="1"/>
</dbReference>
<dbReference type="PANTHER" id="PTHR11806">
    <property type="entry name" value="GLUCOSE INHIBITED DIVISION PROTEIN A"/>
    <property type="match status" value="1"/>
</dbReference>
<dbReference type="PANTHER" id="PTHR11806:SF2">
    <property type="entry name" value="METHYLENETETRAHYDROFOLATE--TRNA-(URACIL-5-)-METHYLTRANSFERASE TRMFO"/>
    <property type="match status" value="1"/>
</dbReference>
<dbReference type="Pfam" id="PF01134">
    <property type="entry name" value="GIDA"/>
    <property type="match status" value="1"/>
</dbReference>
<dbReference type="SUPFAM" id="SSF51905">
    <property type="entry name" value="FAD/NAD(P)-binding domain"/>
    <property type="match status" value="1"/>
</dbReference>
<dbReference type="PROSITE" id="PS01281">
    <property type="entry name" value="GIDA_2"/>
    <property type="match status" value="1"/>
</dbReference>
<gene>
    <name evidence="1" type="primary">trmFO</name>
    <name type="synonym">gid</name>
    <name type="ordered locus">BLi01833</name>
    <name type="ordered locus">BL01280</name>
</gene>
<comment type="function">
    <text evidence="1">Catalyzes the folate-dependent formation of 5-methyl-uridine at position 54 (M-5-U54) in all tRNAs.</text>
</comment>
<comment type="catalytic activity">
    <reaction evidence="1">
        <text>uridine(54) in tRNA + (6R)-5,10-methylene-5,6,7,8-tetrahydrofolate + NADH + H(+) = 5-methyluridine(54) in tRNA + (6S)-5,6,7,8-tetrahydrofolate + NAD(+)</text>
        <dbReference type="Rhea" id="RHEA:16873"/>
        <dbReference type="Rhea" id="RHEA-COMP:10167"/>
        <dbReference type="Rhea" id="RHEA-COMP:10193"/>
        <dbReference type="ChEBI" id="CHEBI:15378"/>
        <dbReference type="ChEBI" id="CHEBI:15636"/>
        <dbReference type="ChEBI" id="CHEBI:57453"/>
        <dbReference type="ChEBI" id="CHEBI:57540"/>
        <dbReference type="ChEBI" id="CHEBI:57945"/>
        <dbReference type="ChEBI" id="CHEBI:65315"/>
        <dbReference type="ChEBI" id="CHEBI:74447"/>
        <dbReference type="EC" id="2.1.1.74"/>
    </reaction>
</comment>
<comment type="catalytic activity">
    <reaction evidence="1">
        <text>uridine(54) in tRNA + (6R)-5,10-methylene-5,6,7,8-tetrahydrofolate + NADPH + H(+) = 5-methyluridine(54) in tRNA + (6S)-5,6,7,8-tetrahydrofolate + NADP(+)</text>
        <dbReference type="Rhea" id="RHEA:62372"/>
        <dbReference type="Rhea" id="RHEA-COMP:10167"/>
        <dbReference type="Rhea" id="RHEA-COMP:10193"/>
        <dbReference type="ChEBI" id="CHEBI:15378"/>
        <dbReference type="ChEBI" id="CHEBI:15636"/>
        <dbReference type="ChEBI" id="CHEBI:57453"/>
        <dbReference type="ChEBI" id="CHEBI:57783"/>
        <dbReference type="ChEBI" id="CHEBI:58349"/>
        <dbReference type="ChEBI" id="CHEBI:65315"/>
        <dbReference type="ChEBI" id="CHEBI:74447"/>
        <dbReference type="EC" id="2.1.1.74"/>
    </reaction>
</comment>
<comment type="cofactor">
    <cofactor evidence="1">
        <name>FAD</name>
        <dbReference type="ChEBI" id="CHEBI:57692"/>
    </cofactor>
</comment>
<comment type="subcellular location">
    <subcellularLocation>
        <location evidence="1">Cytoplasm</location>
    </subcellularLocation>
</comment>
<comment type="similarity">
    <text evidence="1">Belongs to the MnmG family. TrmFO subfamily.</text>
</comment>
<protein>
    <recommendedName>
        <fullName evidence="1">Methylenetetrahydrofolate--tRNA-(uracil-5-)-methyltransferase TrmFO</fullName>
        <ecNumber evidence="1">2.1.1.74</ecNumber>
    </recommendedName>
    <alternativeName>
        <fullName evidence="1">Folate-dependent tRNA (uracil-5-)-methyltransferase</fullName>
    </alternativeName>
    <alternativeName>
        <fullName evidence="1">Folate-dependent tRNA(M-5-U54)-methyltransferase</fullName>
    </alternativeName>
</protein>
<proteinExistence type="inferred from homology"/>